<name>LPXE_HELPJ</name>
<gene>
    <name evidence="6" type="primary">lpxE</name>
    <name type="ordered locus">jhp_0019</name>
</gene>
<proteinExistence type="inferred from homology"/>
<accession>Q9ZN40</accession>
<dbReference type="EC" id="3.1.-.-" evidence="7"/>
<dbReference type="EMBL" id="AE001439">
    <property type="protein sequence ID" value="AAD05601.1"/>
    <property type="molecule type" value="Genomic_DNA"/>
</dbReference>
<dbReference type="PIR" id="A71985">
    <property type="entry name" value="A71985"/>
</dbReference>
<dbReference type="SMR" id="Q9ZN40"/>
<dbReference type="KEGG" id="hpj:jhp_0019"/>
<dbReference type="PATRIC" id="fig|85963.30.peg.1023"/>
<dbReference type="eggNOG" id="COG0671">
    <property type="taxonomic scope" value="Bacteria"/>
</dbReference>
<dbReference type="UniPathway" id="UPA00973"/>
<dbReference type="Proteomes" id="UP000000804">
    <property type="component" value="Chromosome"/>
</dbReference>
<dbReference type="GO" id="GO:0005886">
    <property type="term" value="C:plasma membrane"/>
    <property type="evidence" value="ECO:0007669"/>
    <property type="project" value="UniProtKB-SubCell"/>
</dbReference>
<dbReference type="GO" id="GO:0016791">
    <property type="term" value="F:phosphatase activity"/>
    <property type="evidence" value="ECO:0000315"/>
    <property type="project" value="UniProtKB"/>
</dbReference>
<dbReference type="GO" id="GO:0009245">
    <property type="term" value="P:lipid A biosynthetic process"/>
    <property type="evidence" value="ECO:0000315"/>
    <property type="project" value="UniProtKB"/>
</dbReference>
<dbReference type="GO" id="GO:0009103">
    <property type="term" value="P:lipopolysaccharide biosynthetic process"/>
    <property type="evidence" value="ECO:0007669"/>
    <property type="project" value="UniProtKB-KW"/>
</dbReference>
<dbReference type="GO" id="GO:0046677">
    <property type="term" value="P:response to antibiotic"/>
    <property type="evidence" value="ECO:0007669"/>
    <property type="project" value="UniProtKB-KW"/>
</dbReference>
<dbReference type="GO" id="GO:0141043">
    <property type="term" value="P:symbiont-mediated evasion of host innate immune response"/>
    <property type="evidence" value="ECO:0000315"/>
    <property type="project" value="UniProtKB"/>
</dbReference>
<dbReference type="FunFam" id="1.20.144.10:FF:000044">
    <property type="entry name" value="Lipid A 1-phosphatase"/>
    <property type="match status" value="1"/>
</dbReference>
<dbReference type="Gene3D" id="1.20.144.10">
    <property type="entry name" value="Phosphatidic acid phosphatase type 2/haloperoxidase"/>
    <property type="match status" value="1"/>
</dbReference>
<dbReference type="InterPro" id="IPR036938">
    <property type="entry name" value="P_Acid_Pase_2/haloperoxi_sf"/>
</dbReference>
<dbReference type="InterPro" id="IPR000326">
    <property type="entry name" value="P_Acid_Pase_2/haloperoxidase"/>
</dbReference>
<dbReference type="NCBIfam" id="NF007159">
    <property type="entry name" value="PRK09597.1"/>
    <property type="match status" value="1"/>
</dbReference>
<dbReference type="Pfam" id="PF01569">
    <property type="entry name" value="PAP2"/>
    <property type="match status" value="1"/>
</dbReference>
<dbReference type="SUPFAM" id="SSF48317">
    <property type="entry name" value="Acid phosphatase/Vanadium-dependent haloperoxidase"/>
    <property type="match status" value="1"/>
</dbReference>
<keyword id="KW-0046">Antibiotic resistance</keyword>
<keyword id="KW-0997">Cell inner membrane</keyword>
<keyword id="KW-1003">Cell membrane</keyword>
<keyword id="KW-0378">Hydrolase</keyword>
<keyword id="KW-0441">Lipid A biosynthesis</keyword>
<keyword id="KW-0444">Lipid biosynthesis</keyword>
<keyword id="KW-0443">Lipid metabolism</keyword>
<keyword id="KW-0448">Lipopolysaccharide biosynthesis</keyword>
<keyword id="KW-0472">Membrane</keyword>
<keyword id="KW-0812">Transmembrane</keyword>
<keyword id="KW-1133">Transmembrane helix</keyword>
<keyword id="KW-0843">Virulence</keyword>
<protein>
    <recommendedName>
        <fullName evidence="5">Lipid A 1-phosphatase</fullName>
        <ecNumber evidence="7">3.1.-.-</ecNumber>
    </recommendedName>
</protein>
<reference key="1">
    <citation type="journal article" date="1999" name="Nature">
        <title>Genomic sequence comparison of two unrelated isolates of the human gastric pathogen Helicobacter pylori.</title>
        <authorList>
            <person name="Alm R.A."/>
            <person name="Ling L.-S.L."/>
            <person name="Moir D.T."/>
            <person name="King B.L."/>
            <person name="Brown E.D."/>
            <person name="Doig P.C."/>
            <person name="Smith D.R."/>
            <person name="Noonan B."/>
            <person name="Guild B.C."/>
            <person name="deJonge B.L."/>
            <person name="Carmel G."/>
            <person name="Tummino P.J."/>
            <person name="Caruso A."/>
            <person name="Uria-Nickelsen M."/>
            <person name="Mills D.M."/>
            <person name="Ives C."/>
            <person name="Gibson R."/>
            <person name="Merberg D."/>
            <person name="Mills S.D."/>
            <person name="Jiang Q."/>
            <person name="Taylor D.E."/>
            <person name="Vovis G.F."/>
            <person name="Trust T.J."/>
        </authorList>
    </citation>
    <scope>NUCLEOTIDE SEQUENCE [LARGE SCALE GENOMIC DNA]</scope>
    <source>
        <strain>J99 / ATCC 700824</strain>
    </source>
</reference>
<reference key="2">
    <citation type="journal article" date="2004" name="J. Biol. Chem.">
        <title>Periplasmic cleavage and modification of the 1-phosphate group of Helicobacter pylori lipid A.</title>
        <authorList>
            <person name="Tran A.X."/>
            <person name="Karbarz M.J."/>
            <person name="Wang X."/>
            <person name="Raetz C.R."/>
            <person name="McGrath S.C."/>
            <person name="Cotter R.J."/>
            <person name="Trent M.S."/>
        </authorList>
    </citation>
    <scope>FUNCTION</scope>
    <source>
        <strain>J99 / ATCC 700824</strain>
    </source>
</reference>
<reference key="3">
    <citation type="journal article" date="2006" name="J. Bacteriol.">
        <title>The lipid A 1-phosphatase of Helicobacter pylori is required for resistance to the antimicrobial peptide polymyxin.</title>
        <authorList>
            <person name="Tran A.X."/>
            <person name="Whittimore J.D."/>
            <person name="Wyrick P.B."/>
            <person name="McGrath S.C."/>
            <person name="Cotter R.J."/>
            <person name="Trent M.S."/>
        </authorList>
    </citation>
    <scope>FUNCTION</scope>
    <scope>DISRUPTION PHENOTYPE</scope>
    <scope>STRUCTURE OF LIPID A</scope>
    <scope>ANTIBIOTIC RESISTANCE</scope>
    <source>
        <strain>J99 / ATCC 700824</strain>
    </source>
</reference>
<reference key="4">
    <citation type="journal article" date="2011" name="PLoS Pathog.">
        <title>Helicobacter pylori versus the host: remodeling of the bacterial outer membrane is required for survival in the gastric mucosa.</title>
        <authorList>
            <person name="Cullen T.W."/>
            <person name="Giles D.K."/>
            <person name="Wolf L.N."/>
            <person name="Ecobichon C."/>
            <person name="Boneca I.G."/>
            <person name="Trent M.S."/>
        </authorList>
    </citation>
    <scope>FUNCTION</scope>
    <scope>PATHWAY</scope>
    <scope>DISRUPTION PHENOTYPE</scope>
    <scope>STRUCTURE OF LIPID A</scope>
    <scope>ANTIBIOTIC RESISTANCE</scope>
    <source>
        <strain>B128</strain>
        <strain>J99 / ATCC 700824</strain>
        <strain>X47</strain>
    </source>
</reference>
<comment type="function">
    <text evidence="3 4 8">Removes the 1-phosphate group from tetra- and probably hexaacylated lipid A species (PubMed:16740959). Absence of the 1-phosphate group renders the bacteria partially resistant to host-derived cationic antimicrobial peptides (CAMP), allowing it to camouflage itself from the host innate immune response, and plays a role in the long-term colonization of the host's stomach (PubMed:22216004).</text>
</comment>
<comment type="pathway">
    <text evidence="4 7">Bacterial outer membrane biogenesis; LPS lipid A biosynthesis.</text>
</comment>
<comment type="subcellular location">
    <subcellularLocation>
        <location evidence="1">Cell inner membrane</location>
        <topology evidence="2">Multi-pass membrane protein</topology>
    </subcellularLocation>
</comment>
<comment type="disruption phenotype">
    <text evidence="3 4">Accumulation of 1-phosphate tetraacylated lipid A, unlike strain 26695 no hexaacylated lipid A is detected (PubMed:16740959, PubMed:22216004). 16-fold to 25-fold decrease in resistance to CAMP polymyxin B (PMB) (PubMed:16740959, PubMed:22216004). Increased cell-surface binding of CAMP, 2-fold decrease in resistance to endogenous antibacterial peptide Hp (rplA). Lipopolysaccharide (LPS) from this strain induces the human innate immune response via Toll-like receptor 4 (TLR4) 2-fold in cultured cells (similar effects are seen with mouse cells, has no effect on TLR2-mediated induction). No changes in O-antigen or motility. Decreased ability to colonize C57BL/6J mouse stomachs (using mouse-adapted H.pylori strains B128 and X47). A double lpxE-lpxF mutant accumulates 1-, 4'-bisphosphate hexaacylated lipid A, has 1000-fold decrease in resistance to PMB (a similar reduction in resistance is seen for other human-derived CAMPs), a 70-fold decrease in resistance to endogenous antibacterial peptide Hp, induces the innate immune response via TLR4 10-fold, loss of colonization of C57BL/6J mouse stomachs (strains B128 and X47) (PubMed:22216004).</text>
</comment>
<comment type="miscellaneous">
    <text evidence="3 4">In this organism most lipid A is tetraacylated without a phosphate group at the 4'-position and a phosphoethanolamine residue at the 1-position.</text>
</comment>
<comment type="similarity">
    <text evidence="7">Belongs to the lipid A LpxE 1-phosphatase family.</text>
</comment>
<feature type="chain" id="PRO_0000432489" description="Lipid A 1-phosphatase">
    <location>
        <begin position="1"/>
        <end position="191"/>
    </location>
</feature>
<feature type="transmembrane region" description="Helical; Name=1" evidence="2">
    <location>
        <begin position="22"/>
        <end position="42"/>
    </location>
</feature>
<feature type="transmembrane region" description="Helical; Name=2" evidence="2">
    <location>
        <begin position="60"/>
        <end position="80"/>
    </location>
</feature>
<feature type="transmembrane region" description="Helical; Name=3" evidence="2">
    <location>
        <begin position="117"/>
        <end position="137"/>
    </location>
</feature>
<feature type="transmembrane region" description="Helical; Name=4" evidence="2">
    <location>
        <begin position="145"/>
        <end position="162"/>
    </location>
</feature>
<feature type="transmembrane region" description="Helical; Name=5" evidence="2">
    <location>
        <begin position="164"/>
        <end position="184"/>
    </location>
</feature>
<sequence>MKKFLFKQKFCESLPKSFSKTLLALSLGLILLGVFIPFPKVPKHQSVPLALHFTEHYARFIPTILSVAIPLIQRDAVGLFQVANASIATTFLTHATKRALNHVTINDQRLGERPYGGNFNMPSGHSSMVGLAVAFLMRRYSVKKYLWLLPLIPLTMLARIYLDMHTIGAVLAGLGTGMLCVGLFTSPKNLN</sequence>
<organism>
    <name type="scientific">Helicobacter pylori (strain J99 / ATCC 700824)</name>
    <name type="common">Campylobacter pylori J99</name>
    <dbReference type="NCBI Taxonomy" id="85963"/>
    <lineage>
        <taxon>Bacteria</taxon>
        <taxon>Pseudomonadati</taxon>
        <taxon>Campylobacterota</taxon>
        <taxon>Epsilonproteobacteria</taxon>
        <taxon>Campylobacterales</taxon>
        <taxon>Helicobacteraceae</taxon>
        <taxon>Helicobacter</taxon>
    </lineage>
</organism>
<evidence type="ECO:0000250" key="1">
    <source>
        <dbReference type="UniProtKB" id="O24866"/>
    </source>
</evidence>
<evidence type="ECO:0000255" key="2"/>
<evidence type="ECO:0000269" key="3">
    <source>
    </source>
</evidence>
<evidence type="ECO:0000269" key="4">
    <source>
    </source>
</evidence>
<evidence type="ECO:0000303" key="5">
    <source>
    </source>
</evidence>
<evidence type="ECO:0000303" key="6">
    <source>
    </source>
</evidence>
<evidence type="ECO:0000305" key="7"/>
<evidence type="ECO:0000305" key="8">
    <source>
    </source>
</evidence>